<protein>
    <recommendedName>
        <fullName evidence="1">Glycerol kinase</fullName>
        <ecNumber evidence="1">2.7.1.30</ecNumber>
    </recommendedName>
    <alternativeName>
        <fullName evidence="1">ATP:glycerol 3-phosphotransferase</fullName>
    </alternativeName>
    <alternativeName>
        <fullName evidence="1">Glycerokinase</fullName>
        <shortName evidence="1">GK</shortName>
    </alternativeName>
</protein>
<organism>
    <name type="scientific">Bacillus cereus (strain G9842)</name>
    <dbReference type="NCBI Taxonomy" id="405531"/>
    <lineage>
        <taxon>Bacteria</taxon>
        <taxon>Bacillati</taxon>
        <taxon>Bacillota</taxon>
        <taxon>Bacilli</taxon>
        <taxon>Bacillales</taxon>
        <taxon>Bacillaceae</taxon>
        <taxon>Bacillus</taxon>
        <taxon>Bacillus cereus group</taxon>
    </lineage>
</organism>
<feature type="chain" id="PRO_1000118543" description="Glycerol kinase">
    <location>
        <begin position="1"/>
        <end position="496"/>
    </location>
</feature>
<feature type="binding site" evidence="1">
    <location>
        <position position="12"/>
    </location>
    <ligand>
        <name>ADP</name>
        <dbReference type="ChEBI" id="CHEBI:456216"/>
    </ligand>
</feature>
<feature type="binding site" evidence="1">
    <location>
        <position position="12"/>
    </location>
    <ligand>
        <name>ATP</name>
        <dbReference type="ChEBI" id="CHEBI:30616"/>
    </ligand>
</feature>
<feature type="binding site" evidence="1">
    <location>
        <position position="12"/>
    </location>
    <ligand>
        <name>sn-glycerol 3-phosphate</name>
        <dbReference type="ChEBI" id="CHEBI:57597"/>
    </ligand>
</feature>
<feature type="binding site" evidence="1">
    <location>
        <position position="13"/>
    </location>
    <ligand>
        <name>ATP</name>
        <dbReference type="ChEBI" id="CHEBI:30616"/>
    </ligand>
</feature>
<feature type="binding site" evidence="1">
    <location>
        <position position="14"/>
    </location>
    <ligand>
        <name>ATP</name>
        <dbReference type="ChEBI" id="CHEBI:30616"/>
    </ligand>
</feature>
<feature type="binding site" evidence="1">
    <location>
        <position position="16"/>
    </location>
    <ligand>
        <name>ADP</name>
        <dbReference type="ChEBI" id="CHEBI:456216"/>
    </ligand>
</feature>
<feature type="binding site" evidence="1">
    <location>
        <position position="82"/>
    </location>
    <ligand>
        <name>glycerol</name>
        <dbReference type="ChEBI" id="CHEBI:17754"/>
    </ligand>
</feature>
<feature type="binding site" evidence="1">
    <location>
        <position position="82"/>
    </location>
    <ligand>
        <name>sn-glycerol 3-phosphate</name>
        <dbReference type="ChEBI" id="CHEBI:57597"/>
    </ligand>
</feature>
<feature type="binding site" evidence="1">
    <location>
        <position position="83"/>
    </location>
    <ligand>
        <name>glycerol</name>
        <dbReference type="ChEBI" id="CHEBI:17754"/>
    </ligand>
</feature>
<feature type="binding site" evidence="1">
    <location>
        <position position="83"/>
    </location>
    <ligand>
        <name>sn-glycerol 3-phosphate</name>
        <dbReference type="ChEBI" id="CHEBI:57597"/>
    </ligand>
</feature>
<feature type="binding site" evidence="1">
    <location>
        <position position="134"/>
    </location>
    <ligand>
        <name>glycerol</name>
        <dbReference type="ChEBI" id="CHEBI:17754"/>
    </ligand>
</feature>
<feature type="binding site" evidence="1">
    <location>
        <position position="134"/>
    </location>
    <ligand>
        <name>sn-glycerol 3-phosphate</name>
        <dbReference type="ChEBI" id="CHEBI:57597"/>
    </ligand>
</feature>
<feature type="binding site" evidence="1">
    <location>
        <position position="244"/>
    </location>
    <ligand>
        <name>glycerol</name>
        <dbReference type="ChEBI" id="CHEBI:17754"/>
    </ligand>
</feature>
<feature type="binding site" evidence="1">
    <location>
        <position position="244"/>
    </location>
    <ligand>
        <name>sn-glycerol 3-phosphate</name>
        <dbReference type="ChEBI" id="CHEBI:57597"/>
    </ligand>
</feature>
<feature type="binding site" evidence="1">
    <location>
        <position position="245"/>
    </location>
    <ligand>
        <name>glycerol</name>
        <dbReference type="ChEBI" id="CHEBI:17754"/>
    </ligand>
</feature>
<feature type="binding site" evidence="1">
    <location>
        <position position="266"/>
    </location>
    <ligand>
        <name>ADP</name>
        <dbReference type="ChEBI" id="CHEBI:456216"/>
    </ligand>
</feature>
<feature type="binding site" evidence="1">
    <location>
        <position position="266"/>
    </location>
    <ligand>
        <name>ATP</name>
        <dbReference type="ChEBI" id="CHEBI:30616"/>
    </ligand>
</feature>
<feature type="binding site" evidence="1">
    <location>
        <position position="309"/>
    </location>
    <ligand>
        <name>ADP</name>
        <dbReference type="ChEBI" id="CHEBI:456216"/>
    </ligand>
</feature>
<feature type="binding site" evidence="1">
    <location>
        <position position="309"/>
    </location>
    <ligand>
        <name>ATP</name>
        <dbReference type="ChEBI" id="CHEBI:30616"/>
    </ligand>
</feature>
<feature type="binding site" evidence="1">
    <location>
        <position position="313"/>
    </location>
    <ligand>
        <name>ATP</name>
        <dbReference type="ChEBI" id="CHEBI:30616"/>
    </ligand>
</feature>
<feature type="binding site" evidence="1">
    <location>
        <position position="410"/>
    </location>
    <ligand>
        <name>ADP</name>
        <dbReference type="ChEBI" id="CHEBI:456216"/>
    </ligand>
</feature>
<feature type="binding site" evidence="1">
    <location>
        <position position="410"/>
    </location>
    <ligand>
        <name>ATP</name>
        <dbReference type="ChEBI" id="CHEBI:30616"/>
    </ligand>
</feature>
<feature type="binding site" evidence="1">
    <location>
        <position position="414"/>
    </location>
    <ligand>
        <name>ADP</name>
        <dbReference type="ChEBI" id="CHEBI:456216"/>
    </ligand>
</feature>
<feature type="modified residue" description="Phosphohistidine; by HPr" evidence="1">
    <location>
        <position position="230"/>
    </location>
</feature>
<gene>
    <name evidence="1" type="primary">glpK</name>
    <name type="ordered locus">BCG9842_B4233</name>
</gene>
<evidence type="ECO:0000255" key="1">
    <source>
        <dbReference type="HAMAP-Rule" id="MF_00186"/>
    </source>
</evidence>
<reference key="1">
    <citation type="submission" date="2008-10" db="EMBL/GenBank/DDBJ databases">
        <title>Genome sequence of Bacillus cereus G9842.</title>
        <authorList>
            <person name="Dodson R.J."/>
            <person name="Durkin A.S."/>
            <person name="Rosovitz M.J."/>
            <person name="Rasko D.A."/>
            <person name="Hoffmaster A."/>
            <person name="Ravel J."/>
            <person name="Sutton G."/>
        </authorList>
    </citation>
    <scope>NUCLEOTIDE SEQUENCE [LARGE SCALE GENOMIC DNA]</scope>
    <source>
        <strain>G9842</strain>
    </source>
</reference>
<name>GLPK_BACC2</name>
<sequence length="496" mass="55077">MKKYILSLDQGTTSSRAILFNKKGEIVHSAQKEFTQHFPKPGWVEHNAQEIWGSILAVIATCLSEADVKPEQIAGIGITNQRETTVVWDKTTSKPIYNAIVWQSRQTAEICDELKEKGYSEMVREKTGLLIDAYFSGTKVKWILDNVEGAREKAENGDLLFGTIDSWLVWKLSGGKAHVTDYSNASRTLMFNIHDLQWDDELLEMLTVPKSMLPEVRPSSEIYGETIDYHFFGQNVPIAGVAGDQQAALFGQACFGEGMAKNTYGTGCFMLMNTGEKAVASEHGLLTTIAWGIDGKVNYALEGSIFVAGSAIQWLRDGMRMFKDASESEVYASRVESTDGVYVVPAFVGLGTPYWDSEVRGAMFGVTRGTTKEHFIRATLESLAYQTKDVLCAMEADSGIELKTLRVDGGAVKNNFLMKFQSDILDVPVERPVINETTALGAAYLAGLAVGYWKNQDEIKSQWHMDKRFEPTMEAETSEELYAGWKKAIEATKAFK</sequence>
<accession>B7IKB1</accession>
<keyword id="KW-0067">ATP-binding</keyword>
<keyword id="KW-0319">Glycerol metabolism</keyword>
<keyword id="KW-0418">Kinase</keyword>
<keyword id="KW-0547">Nucleotide-binding</keyword>
<keyword id="KW-0597">Phosphoprotein</keyword>
<keyword id="KW-0808">Transferase</keyword>
<dbReference type="EC" id="2.7.1.30" evidence="1"/>
<dbReference type="EMBL" id="CP001186">
    <property type="protein sequence ID" value="ACK95899.1"/>
    <property type="molecule type" value="Genomic_DNA"/>
</dbReference>
<dbReference type="RefSeq" id="WP_000760013.1">
    <property type="nucleotide sequence ID" value="NC_011772.1"/>
</dbReference>
<dbReference type="SMR" id="B7IKB1"/>
<dbReference type="KEGG" id="bcg:BCG9842_B4233"/>
<dbReference type="HOGENOM" id="CLU_009281_2_3_9"/>
<dbReference type="UniPathway" id="UPA00618">
    <property type="reaction ID" value="UER00672"/>
</dbReference>
<dbReference type="Proteomes" id="UP000006744">
    <property type="component" value="Chromosome"/>
</dbReference>
<dbReference type="GO" id="GO:0005829">
    <property type="term" value="C:cytosol"/>
    <property type="evidence" value="ECO:0007669"/>
    <property type="project" value="TreeGrafter"/>
</dbReference>
<dbReference type="GO" id="GO:0005524">
    <property type="term" value="F:ATP binding"/>
    <property type="evidence" value="ECO:0007669"/>
    <property type="project" value="UniProtKB-UniRule"/>
</dbReference>
<dbReference type="GO" id="GO:0004370">
    <property type="term" value="F:glycerol kinase activity"/>
    <property type="evidence" value="ECO:0000250"/>
    <property type="project" value="UniProtKB"/>
</dbReference>
<dbReference type="GO" id="GO:0019563">
    <property type="term" value="P:glycerol catabolic process"/>
    <property type="evidence" value="ECO:0007669"/>
    <property type="project" value="UniProtKB-UniRule"/>
</dbReference>
<dbReference type="GO" id="GO:0006071">
    <property type="term" value="P:glycerol metabolic process"/>
    <property type="evidence" value="ECO:0000250"/>
    <property type="project" value="UniProtKB"/>
</dbReference>
<dbReference type="GO" id="GO:0006072">
    <property type="term" value="P:glycerol-3-phosphate metabolic process"/>
    <property type="evidence" value="ECO:0007669"/>
    <property type="project" value="InterPro"/>
</dbReference>
<dbReference type="CDD" id="cd07786">
    <property type="entry name" value="FGGY_EcGK_like"/>
    <property type="match status" value="1"/>
</dbReference>
<dbReference type="FunFam" id="3.30.420.40:FF:000007">
    <property type="entry name" value="Glycerol kinase"/>
    <property type="match status" value="1"/>
</dbReference>
<dbReference type="FunFam" id="3.30.420.40:FF:000008">
    <property type="entry name" value="Glycerol kinase"/>
    <property type="match status" value="1"/>
</dbReference>
<dbReference type="Gene3D" id="3.30.420.40">
    <property type="match status" value="2"/>
</dbReference>
<dbReference type="HAMAP" id="MF_00186">
    <property type="entry name" value="Glycerol_kin"/>
    <property type="match status" value="1"/>
</dbReference>
<dbReference type="InterPro" id="IPR043129">
    <property type="entry name" value="ATPase_NBD"/>
</dbReference>
<dbReference type="InterPro" id="IPR000577">
    <property type="entry name" value="Carb_kinase_FGGY"/>
</dbReference>
<dbReference type="InterPro" id="IPR018483">
    <property type="entry name" value="Carb_kinase_FGGY_CS"/>
</dbReference>
<dbReference type="InterPro" id="IPR018485">
    <property type="entry name" value="FGGY_C"/>
</dbReference>
<dbReference type="InterPro" id="IPR018484">
    <property type="entry name" value="FGGY_N"/>
</dbReference>
<dbReference type="InterPro" id="IPR005999">
    <property type="entry name" value="Glycerol_kin"/>
</dbReference>
<dbReference type="NCBIfam" id="TIGR01311">
    <property type="entry name" value="glycerol_kin"/>
    <property type="match status" value="1"/>
</dbReference>
<dbReference type="NCBIfam" id="NF000756">
    <property type="entry name" value="PRK00047.1"/>
    <property type="match status" value="1"/>
</dbReference>
<dbReference type="PANTHER" id="PTHR10196:SF69">
    <property type="entry name" value="GLYCEROL KINASE"/>
    <property type="match status" value="1"/>
</dbReference>
<dbReference type="PANTHER" id="PTHR10196">
    <property type="entry name" value="SUGAR KINASE"/>
    <property type="match status" value="1"/>
</dbReference>
<dbReference type="Pfam" id="PF02782">
    <property type="entry name" value="FGGY_C"/>
    <property type="match status" value="1"/>
</dbReference>
<dbReference type="Pfam" id="PF00370">
    <property type="entry name" value="FGGY_N"/>
    <property type="match status" value="1"/>
</dbReference>
<dbReference type="PIRSF" id="PIRSF000538">
    <property type="entry name" value="GlpK"/>
    <property type="match status" value="1"/>
</dbReference>
<dbReference type="SUPFAM" id="SSF53067">
    <property type="entry name" value="Actin-like ATPase domain"/>
    <property type="match status" value="2"/>
</dbReference>
<dbReference type="PROSITE" id="PS00933">
    <property type="entry name" value="FGGY_KINASES_1"/>
    <property type="match status" value="1"/>
</dbReference>
<dbReference type="PROSITE" id="PS00445">
    <property type="entry name" value="FGGY_KINASES_2"/>
    <property type="match status" value="1"/>
</dbReference>
<comment type="function">
    <text evidence="1">Key enzyme in the regulation of glycerol uptake and metabolism. Catalyzes the phosphorylation of glycerol to yield sn-glycerol 3-phosphate.</text>
</comment>
<comment type="catalytic activity">
    <reaction evidence="1">
        <text>glycerol + ATP = sn-glycerol 3-phosphate + ADP + H(+)</text>
        <dbReference type="Rhea" id="RHEA:21644"/>
        <dbReference type="ChEBI" id="CHEBI:15378"/>
        <dbReference type="ChEBI" id="CHEBI:17754"/>
        <dbReference type="ChEBI" id="CHEBI:30616"/>
        <dbReference type="ChEBI" id="CHEBI:57597"/>
        <dbReference type="ChEBI" id="CHEBI:456216"/>
        <dbReference type="EC" id="2.7.1.30"/>
    </reaction>
</comment>
<comment type="activity regulation">
    <text evidence="1">Activated by phosphorylation and inhibited by fructose 1,6-bisphosphate (FBP).</text>
</comment>
<comment type="pathway">
    <text evidence="1">Polyol metabolism; glycerol degradation via glycerol kinase pathway; sn-glycerol 3-phosphate from glycerol: step 1/1.</text>
</comment>
<comment type="subunit">
    <text evidence="1">Homotetramer and homodimer (in equilibrium).</text>
</comment>
<comment type="PTM">
    <text evidence="1">The phosphoenolpyruvate-dependent sugar phosphotransferase system (PTS), including enzyme I, and histidine-containing protein (HPr) are required for the phosphorylation, which leads to the activation of the enzyme.</text>
</comment>
<comment type="similarity">
    <text evidence="1">Belongs to the FGGY kinase family.</text>
</comment>
<proteinExistence type="inferred from homology"/>